<comment type="similarity">
    <text evidence="1">Belongs to the UPF0227 family.</text>
</comment>
<accession>Q57QE5</accession>
<sequence length="180" mass="21093">MIIYLHGFDSNSPGNHEKVLQLQFIDPDVRLVSYSTRHPKHDMQHLLKEVDKMLQLNVDERPLICGVGLGGYWAERIGFLCDIRQVVFNPNLFPYENMEGKIDRPEEYADIATKCVTNFREKNRDRCLVILSRHDEALDSQRSAQALHPYYEIVWDEEQTHKFKNISPHLQRIKAFKTLG</sequence>
<organism>
    <name type="scientific">Salmonella choleraesuis (strain SC-B67)</name>
    <dbReference type="NCBI Taxonomy" id="321314"/>
    <lineage>
        <taxon>Bacteria</taxon>
        <taxon>Pseudomonadati</taxon>
        <taxon>Pseudomonadota</taxon>
        <taxon>Gammaproteobacteria</taxon>
        <taxon>Enterobacterales</taxon>
        <taxon>Enterobacteriaceae</taxon>
        <taxon>Salmonella</taxon>
    </lineage>
</organism>
<reference key="1">
    <citation type="journal article" date="2005" name="Nucleic Acids Res.">
        <title>The genome sequence of Salmonella enterica serovar Choleraesuis, a highly invasive and resistant zoonotic pathogen.</title>
        <authorList>
            <person name="Chiu C.-H."/>
            <person name="Tang P."/>
            <person name="Chu C."/>
            <person name="Hu S."/>
            <person name="Bao Q."/>
            <person name="Yu J."/>
            <person name="Chou Y.-Y."/>
            <person name="Wang H.-S."/>
            <person name="Lee Y.-S."/>
        </authorList>
    </citation>
    <scope>NUCLEOTIDE SEQUENCE [LARGE SCALE GENOMIC DNA]</scope>
    <source>
        <strain>SC-B67</strain>
    </source>
</reference>
<name>YCFP_SALCH</name>
<evidence type="ECO:0000255" key="1">
    <source>
        <dbReference type="HAMAP-Rule" id="MF_01047"/>
    </source>
</evidence>
<feature type="chain" id="PRO_1000064293" description="UPF0227 protein YcfP">
    <location>
        <begin position="1"/>
        <end position="180"/>
    </location>
</feature>
<dbReference type="EMBL" id="AE017220">
    <property type="protein sequence ID" value="AAX65066.1"/>
    <property type="molecule type" value="Genomic_DNA"/>
</dbReference>
<dbReference type="RefSeq" id="WP_000587945.1">
    <property type="nucleotide sequence ID" value="NC_006905.1"/>
</dbReference>
<dbReference type="SMR" id="Q57QE5"/>
<dbReference type="ESTHER" id="salty-ycfp">
    <property type="family name" value="abh_upf00227"/>
</dbReference>
<dbReference type="KEGG" id="sec:SCH_1160"/>
<dbReference type="HOGENOM" id="CLU_128769_0_0_6"/>
<dbReference type="Proteomes" id="UP000000538">
    <property type="component" value="Chromosome"/>
</dbReference>
<dbReference type="FunFam" id="3.40.50.1820:FF:000007">
    <property type="entry name" value="UPF0227 protein YcfP"/>
    <property type="match status" value="1"/>
</dbReference>
<dbReference type="Gene3D" id="3.40.50.1820">
    <property type="entry name" value="alpha/beta hydrolase"/>
    <property type="match status" value="1"/>
</dbReference>
<dbReference type="HAMAP" id="MF_01047">
    <property type="entry name" value="UPF0227"/>
    <property type="match status" value="1"/>
</dbReference>
<dbReference type="InterPro" id="IPR029058">
    <property type="entry name" value="AB_hydrolase_fold"/>
</dbReference>
<dbReference type="InterPro" id="IPR022987">
    <property type="entry name" value="UPF0227"/>
</dbReference>
<dbReference type="InterPro" id="IPR008886">
    <property type="entry name" value="UPF0227/Esterase_YqiA"/>
</dbReference>
<dbReference type="NCBIfam" id="NF003431">
    <property type="entry name" value="PRK04940.1"/>
    <property type="match status" value="1"/>
</dbReference>
<dbReference type="PANTHER" id="PTHR35602">
    <property type="entry name" value="ESTERASE YQIA-RELATED"/>
    <property type="match status" value="1"/>
</dbReference>
<dbReference type="PANTHER" id="PTHR35602:SF2">
    <property type="entry name" value="UPF0227 PROTEIN YCFP"/>
    <property type="match status" value="1"/>
</dbReference>
<dbReference type="Pfam" id="PF05728">
    <property type="entry name" value="UPF0227"/>
    <property type="match status" value="1"/>
</dbReference>
<dbReference type="SUPFAM" id="SSF53474">
    <property type="entry name" value="alpha/beta-Hydrolases"/>
    <property type="match status" value="1"/>
</dbReference>
<protein>
    <recommendedName>
        <fullName evidence="1">UPF0227 protein YcfP</fullName>
    </recommendedName>
</protein>
<proteinExistence type="inferred from homology"/>
<gene>
    <name evidence="1" type="primary">ycfP</name>
    <name type="ordered locus">SCH_1160</name>
</gene>